<protein>
    <recommendedName>
        <fullName evidence="1">Heme A synthase</fullName>
        <shortName evidence="1">HAS</shortName>
        <ecNumber evidence="1">1.17.99.9</ecNumber>
    </recommendedName>
    <alternativeName>
        <fullName evidence="1">Cytochrome aa3-controlling protein</fullName>
    </alternativeName>
</protein>
<feature type="chain" id="PRO_0000349008" description="Heme A synthase">
    <location>
        <begin position="1"/>
        <end position="365"/>
    </location>
</feature>
<feature type="transmembrane region" description="Helical" evidence="1">
    <location>
        <begin position="23"/>
        <end position="43"/>
    </location>
</feature>
<feature type="transmembrane region" description="Helical" evidence="1">
    <location>
        <begin position="109"/>
        <end position="129"/>
    </location>
</feature>
<feature type="transmembrane region" description="Helical" evidence="1">
    <location>
        <begin position="137"/>
        <end position="157"/>
    </location>
</feature>
<feature type="transmembrane region" description="Helical" evidence="1">
    <location>
        <begin position="172"/>
        <end position="192"/>
    </location>
</feature>
<feature type="transmembrane region" description="Helical" evidence="1">
    <location>
        <begin position="208"/>
        <end position="228"/>
    </location>
</feature>
<feature type="transmembrane region" description="Helical" evidence="1">
    <location>
        <begin position="274"/>
        <end position="294"/>
    </location>
</feature>
<feature type="transmembrane region" description="Helical" evidence="1">
    <location>
        <begin position="303"/>
        <end position="323"/>
    </location>
</feature>
<feature type="transmembrane region" description="Helical" evidence="1">
    <location>
        <begin position="327"/>
        <end position="347"/>
    </location>
</feature>
<feature type="binding site" description="axial binding residue" evidence="1">
    <location>
        <position position="272"/>
    </location>
    <ligand>
        <name>heme</name>
        <dbReference type="ChEBI" id="CHEBI:30413"/>
    </ligand>
    <ligandPart>
        <name>Fe</name>
        <dbReference type="ChEBI" id="CHEBI:18248"/>
    </ligandPart>
</feature>
<feature type="binding site" description="axial binding residue" evidence="1">
    <location>
        <position position="333"/>
    </location>
    <ligand>
        <name>heme</name>
        <dbReference type="ChEBI" id="CHEBI:30413"/>
    </ligand>
    <ligandPart>
        <name>Fe</name>
        <dbReference type="ChEBI" id="CHEBI:18248"/>
    </ligandPart>
</feature>
<gene>
    <name evidence="1" type="primary">ctaA</name>
    <name type="synonym">cox15</name>
    <name type="ordered locus">Atu1242</name>
    <name type="ORF">AGR_C_2290</name>
</gene>
<dbReference type="EC" id="1.17.99.9" evidence="1"/>
<dbReference type="EMBL" id="AE007869">
    <property type="protein sequence ID" value="AAK87039.1"/>
    <property type="status" value="ALT_INIT"/>
    <property type="molecule type" value="Genomic_DNA"/>
</dbReference>
<dbReference type="RefSeq" id="NP_354254.1">
    <property type="nucleotide sequence ID" value="NC_003062.2"/>
</dbReference>
<dbReference type="SMR" id="Q7CZN9"/>
<dbReference type="STRING" id="176299.Atu1242"/>
<dbReference type="EnsemblBacteria" id="AAK87039">
    <property type="protein sequence ID" value="AAK87039"/>
    <property type="gene ID" value="Atu1242"/>
</dbReference>
<dbReference type="KEGG" id="atu:Atu1242"/>
<dbReference type="PATRIC" id="fig|176299.10.peg.1263"/>
<dbReference type="eggNOG" id="COG1612">
    <property type="taxonomic scope" value="Bacteria"/>
</dbReference>
<dbReference type="HOGENOM" id="CLU_017627_0_0_5"/>
<dbReference type="OrthoDB" id="9793156at2"/>
<dbReference type="UniPathway" id="UPA00269">
    <property type="reaction ID" value="UER00713"/>
</dbReference>
<dbReference type="Proteomes" id="UP000000813">
    <property type="component" value="Chromosome circular"/>
</dbReference>
<dbReference type="GO" id="GO:0005886">
    <property type="term" value="C:plasma membrane"/>
    <property type="evidence" value="ECO:0007669"/>
    <property type="project" value="UniProtKB-SubCell"/>
</dbReference>
<dbReference type="GO" id="GO:0046872">
    <property type="term" value="F:metal ion binding"/>
    <property type="evidence" value="ECO:0007669"/>
    <property type="project" value="UniProtKB-KW"/>
</dbReference>
<dbReference type="GO" id="GO:0016653">
    <property type="term" value="F:oxidoreductase activity, acting on NAD(P)H, heme protein as acceptor"/>
    <property type="evidence" value="ECO:0007669"/>
    <property type="project" value="InterPro"/>
</dbReference>
<dbReference type="GO" id="GO:0006784">
    <property type="term" value="P:heme A biosynthetic process"/>
    <property type="evidence" value="ECO:0007669"/>
    <property type="project" value="UniProtKB-UniRule"/>
</dbReference>
<dbReference type="HAMAP" id="MF_01665">
    <property type="entry name" value="HemeA_synth_type2"/>
    <property type="match status" value="1"/>
</dbReference>
<dbReference type="InterPro" id="IPR003780">
    <property type="entry name" value="COX15/CtaA_fam"/>
</dbReference>
<dbReference type="InterPro" id="IPR023754">
    <property type="entry name" value="HemeA_Synthase_type2"/>
</dbReference>
<dbReference type="PANTHER" id="PTHR23289">
    <property type="entry name" value="CYTOCHROME C OXIDASE ASSEMBLY PROTEIN COX15"/>
    <property type="match status" value="1"/>
</dbReference>
<dbReference type="PANTHER" id="PTHR23289:SF2">
    <property type="entry name" value="CYTOCHROME C OXIDASE ASSEMBLY PROTEIN COX15 HOMOLOG"/>
    <property type="match status" value="1"/>
</dbReference>
<dbReference type="Pfam" id="PF02628">
    <property type="entry name" value="COX15-CtaA"/>
    <property type="match status" value="1"/>
</dbReference>
<organism>
    <name type="scientific">Agrobacterium fabrum (strain C58 / ATCC 33970)</name>
    <name type="common">Agrobacterium tumefaciens (strain C58)</name>
    <dbReference type="NCBI Taxonomy" id="176299"/>
    <lineage>
        <taxon>Bacteria</taxon>
        <taxon>Pseudomonadati</taxon>
        <taxon>Pseudomonadota</taxon>
        <taxon>Alphaproteobacteria</taxon>
        <taxon>Hyphomicrobiales</taxon>
        <taxon>Rhizobiaceae</taxon>
        <taxon>Rhizobium/Agrobacterium group</taxon>
        <taxon>Agrobacterium</taxon>
        <taxon>Agrobacterium tumefaciens complex</taxon>
    </lineage>
</organism>
<name>CTAA_AGRFC</name>
<sequence length="365" mass="40958">MANGSVDMVVEAALQKQEKDRRLLRIWLRVVLFTLFCLVLVGGATRLTESGLSITEWKPIHGAIPPLSVAEWEEEFQLYKRIPQYQEINKGMSLDEFKTIFWWEWAHRLLARTIGLVFALPLAFFWLTGRVEKRLRLPLVGLLALGGFQGFVGWWMVSSGLVNRTDVSQYRLATHLTIACLIFAGCMWILRGLSHHSPDAADERTGRGFAALLTVLCLFQIYLGALVAGLNAGLSYNTWPLMDGSLVPGDLFLQQPWWINLFENPKTVQFVHRLGAYTLFAATLWHMVSMARALPGTPHARRAVLFFVLISVQAGLGITTLLMHVDIHVALAHQGMALILLGFSVAHWRGFIGEYPAPVAVEVRD</sequence>
<proteinExistence type="inferred from homology"/>
<comment type="function">
    <text evidence="1">Catalyzes the conversion of heme O to heme A by two successive hydroxylations of the methyl group at C8. The first hydroxylation forms heme I, the second hydroxylation results in an unstable dihydroxymethyl group, which spontaneously dehydrates, resulting in the formyl group of heme A.</text>
</comment>
<comment type="catalytic activity">
    <reaction evidence="1">
        <text>Fe(II)-heme o + 2 A + H2O = Fe(II)-heme a + 2 AH2</text>
        <dbReference type="Rhea" id="RHEA:63388"/>
        <dbReference type="ChEBI" id="CHEBI:13193"/>
        <dbReference type="ChEBI" id="CHEBI:15377"/>
        <dbReference type="ChEBI" id="CHEBI:17499"/>
        <dbReference type="ChEBI" id="CHEBI:60530"/>
        <dbReference type="ChEBI" id="CHEBI:61715"/>
        <dbReference type="EC" id="1.17.99.9"/>
    </reaction>
    <physiologicalReaction direction="left-to-right" evidence="1">
        <dbReference type="Rhea" id="RHEA:63389"/>
    </physiologicalReaction>
</comment>
<comment type="cofactor">
    <cofactor evidence="1">
        <name>heme b</name>
        <dbReference type="ChEBI" id="CHEBI:60344"/>
    </cofactor>
</comment>
<comment type="pathway">
    <text evidence="1">Porphyrin-containing compound metabolism; heme A biosynthesis; heme A from heme O: step 1/1.</text>
</comment>
<comment type="subunit">
    <text evidence="1">Interacts with CtaB.</text>
</comment>
<comment type="subcellular location">
    <subcellularLocation>
        <location evidence="1">Cell membrane</location>
        <topology evidence="1">Multi-pass membrane protein</topology>
    </subcellularLocation>
</comment>
<comment type="similarity">
    <text evidence="1">Belongs to the COX15/CtaA family. Type 2 subfamily.</text>
</comment>
<comment type="sequence caution" evidence="2">
    <conflict type="erroneous initiation">
        <sequence resource="EMBL-CDS" id="AAK87039"/>
    </conflict>
</comment>
<reference key="1">
    <citation type="journal article" date="2001" name="Science">
        <title>Genome sequence of the plant pathogen and biotechnology agent Agrobacterium tumefaciens C58.</title>
        <authorList>
            <person name="Goodner B."/>
            <person name="Hinkle G."/>
            <person name="Gattung S."/>
            <person name="Miller N."/>
            <person name="Blanchard M."/>
            <person name="Qurollo B."/>
            <person name="Goldman B.S."/>
            <person name="Cao Y."/>
            <person name="Askenazi M."/>
            <person name="Halling C."/>
            <person name="Mullin L."/>
            <person name="Houmiel K."/>
            <person name="Gordon J."/>
            <person name="Vaudin M."/>
            <person name="Iartchouk O."/>
            <person name="Epp A."/>
            <person name="Liu F."/>
            <person name="Wollam C."/>
            <person name="Allinger M."/>
            <person name="Doughty D."/>
            <person name="Scott C."/>
            <person name="Lappas C."/>
            <person name="Markelz B."/>
            <person name="Flanagan C."/>
            <person name="Crowell C."/>
            <person name="Gurson J."/>
            <person name="Lomo C."/>
            <person name="Sear C."/>
            <person name="Strub G."/>
            <person name="Cielo C."/>
            <person name="Slater S."/>
        </authorList>
    </citation>
    <scope>NUCLEOTIDE SEQUENCE [LARGE SCALE GENOMIC DNA]</scope>
    <source>
        <strain>C58 / ATCC 33970</strain>
    </source>
</reference>
<reference key="2">
    <citation type="journal article" date="2001" name="Science">
        <title>The genome of the natural genetic engineer Agrobacterium tumefaciens C58.</title>
        <authorList>
            <person name="Wood D.W."/>
            <person name="Setubal J.C."/>
            <person name="Kaul R."/>
            <person name="Monks D.E."/>
            <person name="Kitajima J.P."/>
            <person name="Okura V.K."/>
            <person name="Zhou Y."/>
            <person name="Chen L."/>
            <person name="Wood G.E."/>
            <person name="Almeida N.F. Jr."/>
            <person name="Woo L."/>
            <person name="Chen Y."/>
            <person name="Paulsen I.T."/>
            <person name="Eisen J.A."/>
            <person name="Karp P.D."/>
            <person name="Bovee D. Sr."/>
            <person name="Chapman P."/>
            <person name="Clendenning J."/>
            <person name="Deatherage G."/>
            <person name="Gillet W."/>
            <person name="Grant C."/>
            <person name="Kutyavin T."/>
            <person name="Levy R."/>
            <person name="Li M.-J."/>
            <person name="McClelland E."/>
            <person name="Palmieri A."/>
            <person name="Raymond C."/>
            <person name="Rouse G."/>
            <person name="Saenphimmachak C."/>
            <person name="Wu Z."/>
            <person name="Romero P."/>
            <person name="Gordon D."/>
            <person name="Zhang S."/>
            <person name="Yoo H."/>
            <person name="Tao Y."/>
            <person name="Biddle P."/>
            <person name="Jung M."/>
            <person name="Krespan W."/>
            <person name="Perry M."/>
            <person name="Gordon-Kamm B."/>
            <person name="Liao L."/>
            <person name="Kim S."/>
            <person name="Hendrick C."/>
            <person name="Zhao Z.-Y."/>
            <person name="Dolan M."/>
            <person name="Chumley F."/>
            <person name="Tingey S.V."/>
            <person name="Tomb J.-F."/>
            <person name="Gordon M.P."/>
            <person name="Olson M.V."/>
            <person name="Nester E.W."/>
        </authorList>
    </citation>
    <scope>NUCLEOTIDE SEQUENCE [LARGE SCALE GENOMIC DNA]</scope>
    <source>
        <strain>C58 / ATCC 33970</strain>
    </source>
</reference>
<evidence type="ECO:0000255" key="1">
    <source>
        <dbReference type="HAMAP-Rule" id="MF_01665"/>
    </source>
</evidence>
<evidence type="ECO:0000305" key="2"/>
<accession>Q7CZN9</accession>
<keyword id="KW-1003">Cell membrane</keyword>
<keyword id="KW-0350">Heme biosynthesis</keyword>
<keyword id="KW-0408">Iron</keyword>
<keyword id="KW-0472">Membrane</keyword>
<keyword id="KW-0479">Metal-binding</keyword>
<keyword id="KW-0560">Oxidoreductase</keyword>
<keyword id="KW-1185">Reference proteome</keyword>
<keyword id="KW-0812">Transmembrane</keyword>
<keyword id="KW-1133">Transmembrane helix</keyword>